<name>PIMT_METKA</name>
<keyword id="KW-0963">Cytoplasm</keyword>
<keyword id="KW-0489">Methyltransferase</keyword>
<keyword id="KW-1185">Reference proteome</keyword>
<keyword id="KW-0949">S-adenosyl-L-methionine</keyword>
<keyword id="KW-0808">Transferase</keyword>
<dbReference type="EC" id="2.1.1.77" evidence="1"/>
<dbReference type="EMBL" id="AE009439">
    <property type="protein sequence ID" value="AAM01499.1"/>
    <property type="molecule type" value="Genomic_DNA"/>
</dbReference>
<dbReference type="RefSeq" id="WP_011018654.1">
    <property type="nucleotide sequence ID" value="NC_003551.1"/>
</dbReference>
<dbReference type="SMR" id="Q8TYL4"/>
<dbReference type="FunCoup" id="Q8TYL4">
    <property type="interactions" value="55"/>
</dbReference>
<dbReference type="STRING" id="190192.MK0282"/>
<dbReference type="PaxDb" id="190192-MK0282"/>
<dbReference type="EnsemblBacteria" id="AAM01499">
    <property type="protein sequence ID" value="AAM01499"/>
    <property type="gene ID" value="MK0282"/>
</dbReference>
<dbReference type="GeneID" id="1477585"/>
<dbReference type="KEGG" id="mka:MK0282"/>
<dbReference type="PATRIC" id="fig|190192.8.peg.285"/>
<dbReference type="HOGENOM" id="CLU_055432_2_0_2"/>
<dbReference type="InParanoid" id="Q8TYL4"/>
<dbReference type="OrthoDB" id="33618at2157"/>
<dbReference type="Proteomes" id="UP000001826">
    <property type="component" value="Chromosome"/>
</dbReference>
<dbReference type="GO" id="GO:0005737">
    <property type="term" value="C:cytoplasm"/>
    <property type="evidence" value="ECO:0007669"/>
    <property type="project" value="UniProtKB-SubCell"/>
</dbReference>
<dbReference type="GO" id="GO:0004719">
    <property type="term" value="F:protein-L-isoaspartate (D-aspartate) O-methyltransferase activity"/>
    <property type="evidence" value="ECO:0007669"/>
    <property type="project" value="UniProtKB-UniRule"/>
</dbReference>
<dbReference type="GO" id="GO:0032259">
    <property type="term" value="P:methylation"/>
    <property type="evidence" value="ECO:0007669"/>
    <property type="project" value="UniProtKB-KW"/>
</dbReference>
<dbReference type="GO" id="GO:0036211">
    <property type="term" value="P:protein modification process"/>
    <property type="evidence" value="ECO:0007669"/>
    <property type="project" value="UniProtKB-UniRule"/>
</dbReference>
<dbReference type="GO" id="GO:0030091">
    <property type="term" value="P:protein repair"/>
    <property type="evidence" value="ECO:0007669"/>
    <property type="project" value="UniProtKB-UniRule"/>
</dbReference>
<dbReference type="CDD" id="cd02440">
    <property type="entry name" value="AdoMet_MTases"/>
    <property type="match status" value="1"/>
</dbReference>
<dbReference type="FunFam" id="3.40.50.150:FF:000010">
    <property type="entry name" value="Protein-L-isoaspartate O-methyltransferase"/>
    <property type="match status" value="1"/>
</dbReference>
<dbReference type="Gene3D" id="3.40.50.150">
    <property type="entry name" value="Vaccinia Virus protein VP39"/>
    <property type="match status" value="1"/>
</dbReference>
<dbReference type="HAMAP" id="MF_00090">
    <property type="entry name" value="PIMT"/>
    <property type="match status" value="1"/>
</dbReference>
<dbReference type="InterPro" id="IPR000682">
    <property type="entry name" value="PCMT"/>
</dbReference>
<dbReference type="InterPro" id="IPR029063">
    <property type="entry name" value="SAM-dependent_MTases_sf"/>
</dbReference>
<dbReference type="NCBIfam" id="TIGR00080">
    <property type="entry name" value="pimt"/>
    <property type="match status" value="1"/>
</dbReference>
<dbReference type="NCBIfam" id="NF001453">
    <property type="entry name" value="PRK00312.1"/>
    <property type="match status" value="1"/>
</dbReference>
<dbReference type="NCBIfam" id="NF010549">
    <property type="entry name" value="PRK13942.1"/>
    <property type="match status" value="1"/>
</dbReference>
<dbReference type="PANTHER" id="PTHR11579">
    <property type="entry name" value="PROTEIN-L-ISOASPARTATE O-METHYLTRANSFERASE"/>
    <property type="match status" value="1"/>
</dbReference>
<dbReference type="PANTHER" id="PTHR11579:SF0">
    <property type="entry name" value="PROTEIN-L-ISOASPARTATE(D-ASPARTATE) O-METHYLTRANSFERASE"/>
    <property type="match status" value="1"/>
</dbReference>
<dbReference type="Pfam" id="PF01135">
    <property type="entry name" value="PCMT"/>
    <property type="match status" value="1"/>
</dbReference>
<dbReference type="SUPFAM" id="SSF53335">
    <property type="entry name" value="S-adenosyl-L-methionine-dependent methyltransferases"/>
    <property type="match status" value="1"/>
</dbReference>
<dbReference type="PROSITE" id="PS01279">
    <property type="entry name" value="PCMT"/>
    <property type="match status" value="1"/>
</dbReference>
<feature type="chain" id="PRO_0000111917" description="Protein-L-isoaspartate O-methyltransferase">
    <location>
        <begin position="1"/>
        <end position="226"/>
    </location>
</feature>
<feature type="active site" evidence="1">
    <location>
        <position position="66"/>
    </location>
</feature>
<protein>
    <recommendedName>
        <fullName evidence="1">Protein-L-isoaspartate O-methyltransferase</fullName>
        <ecNumber evidence="1">2.1.1.77</ecNumber>
    </recommendedName>
    <alternativeName>
        <fullName evidence="1">L-isoaspartyl protein carboxyl methyltransferase</fullName>
    </alternativeName>
    <alternativeName>
        <fullName evidence="1">Protein L-isoaspartyl methyltransferase</fullName>
    </alternativeName>
    <alternativeName>
        <fullName evidence="1">Protein-beta-aspartate methyltransferase</fullName>
        <shortName evidence="1">PIMT</shortName>
    </alternativeName>
</protein>
<evidence type="ECO:0000255" key="1">
    <source>
        <dbReference type="HAMAP-Rule" id="MF_00090"/>
    </source>
</evidence>
<proteinExistence type="inferred from homology"/>
<gene>
    <name evidence="1" type="primary">pcm</name>
    <name type="ordered locus">MK0282</name>
</gene>
<organism>
    <name type="scientific">Methanopyrus kandleri (strain AV19 / DSM 6324 / JCM 9639 / NBRC 100938)</name>
    <dbReference type="NCBI Taxonomy" id="190192"/>
    <lineage>
        <taxon>Archaea</taxon>
        <taxon>Methanobacteriati</taxon>
        <taxon>Methanobacteriota</taxon>
        <taxon>Methanomada group</taxon>
        <taxon>Methanopyri</taxon>
        <taxon>Methanopyrales</taxon>
        <taxon>Methanopyraceae</taxon>
        <taxon>Methanopyrus</taxon>
    </lineage>
</organism>
<reference key="1">
    <citation type="journal article" date="2002" name="Proc. Natl. Acad. Sci. U.S.A.">
        <title>The complete genome of hyperthermophile Methanopyrus kandleri AV19 and monophyly of archaeal methanogens.</title>
        <authorList>
            <person name="Slesarev A.I."/>
            <person name="Mezhevaya K.V."/>
            <person name="Makarova K.S."/>
            <person name="Polushin N.N."/>
            <person name="Shcherbinina O.V."/>
            <person name="Shakhova V.V."/>
            <person name="Belova G.I."/>
            <person name="Aravind L."/>
            <person name="Natale D.A."/>
            <person name="Rogozin I.B."/>
            <person name="Tatusov R.L."/>
            <person name="Wolf Y.I."/>
            <person name="Stetter K.O."/>
            <person name="Malykh A.G."/>
            <person name="Koonin E.V."/>
            <person name="Kozyavkin S.A."/>
        </authorList>
    </citation>
    <scope>NUCLEOTIDE SEQUENCE [LARGE SCALE GENOMIC DNA]</scope>
    <source>
        <strain>AV19 / DSM 6324 / JCM 9639 / NBRC 100938</strain>
    </source>
</reference>
<sequence>MAEDDKVFRRARERLVERLKSLGYIRSNRVAEAMLKVPRHEFVPEDLRDRAYVDSPLPIGRGQTISAPHMVAIMTELLDPRPGHKVLEVGAGSGYHAAVVAELVKPDGRVITVERIPELADFARNNLKKTGYDRFVKVLVGDGTKGYPPEAPYDRILVTAGAPDVPESLLEQLKPGGKMVIPVGDRHMQELWLVEKTEDGEIRRRRHGGCAFVPLIGEEGFQEPES</sequence>
<comment type="function">
    <text evidence="1">Catalyzes the methyl esterification of L-isoaspartyl residues in peptides and proteins that result from spontaneous decomposition of normal L-aspartyl and L-asparaginyl residues. It plays a role in the repair and/or degradation of damaged proteins.</text>
</comment>
<comment type="catalytic activity">
    <reaction evidence="1">
        <text>[protein]-L-isoaspartate + S-adenosyl-L-methionine = [protein]-L-isoaspartate alpha-methyl ester + S-adenosyl-L-homocysteine</text>
        <dbReference type="Rhea" id="RHEA:12705"/>
        <dbReference type="Rhea" id="RHEA-COMP:12143"/>
        <dbReference type="Rhea" id="RHEA-COMP:12144"/>
        <dbReference type="ChEBI" id="CHEBI:57856"/>
        <dbReference type="ChEBI" id="CHEBI:59789"/>
        <dbReference type="ChEBI" id="CHEBI:90596"/>
        <dbReference type="ChEBI" id="CHEBI:90598"/>
        <dbReference type="EC" id="2.1.1.77"/>
    </reaction>
</comment>
<comment type="subcellular location">
    <subcellularLocation>
        <location evidence="1">Cytoplasm</location>
    </subcellularLocation>
</comment>
<comment type="similarity">
    <text evidence="1">Belongs to the methyltransferase superfamily. L-isoaspartyl/D-aspartyl protein methyltransferase family.</text>
</comment>
<accession>Q8TYL4</accession>